<proteinExistence type="inferred from homology"/>
<sequence>MAESYLLDKLKSVELTFHELTRRLADPEVATDPEEFQRVAKARASLEETVDTYDTWKTVQQHLAEARQIAREAASDPELQEMAVQEVNELTEKSAHLEQRLKILLLPRDPNDDKNIMLEIRAGTGGDEASIWAGDLVRLYSRYAESQRWRVKLVSESLGEMGGFKEAILEIQGEQVYSKLKYEAGVHRVQRVPATEASGRVHTSTATVAIMPEVDEVEVKIDPKDIELTTARSGGAGGQNVNKVETAVDLFHKPTGIRIFCTEERSQLQNKERAMQILRAKLYEMKLQEQQSEITSRRRSQVGTGSRSEKIRTYNYKDNRATDHRLGQNFPLNQVLEGDIEGIIQACITQDQQEQLAELAAATA</sequence>
<organism>
    <name type="scientific">Cyanothece sp. (strain PCC 7425 / ATCC 29141)</name>
    <dbReference type="NCBI Taxonomy" id="395961"/>
    <lineage>
        <taxon>Bacteria</taxon>
        <taxon>Bacillati</taxon>
        <taxon>Cyanobacteriota</taxon>
        <taxon>Cyanophyceae</taxon>
        <taxon>Gomontiellales</taxon>
        <taxon>Cyanothecaceae</taxon>
        <taxon>Cyanothece</taxon>
    </lineage>
</organism>
<reference key="1">
    <citation type="journal article" date="2011" name="MBio">
        <title>Novel metabolic attributes of the genus Cyanothece, comprising a group of unicellular nitrogen-fixing Cyanobacteria.</title>
        <authorList>
            <person name="Bandyopadhyay A."/>
            <person name="Elvitigala T."/>
            <person name="Welsh E."/>
            <person name="Stockel J."/>
            <person name="Liberton M."/>
            <person name="Min H."/>
            <person name="Sherman L.A."/>
            <person name="Pakrasi H.B."/>
        </authorList>
    </citation>
    <scope>NUCLEOTIDE SEQUENCE [LARGE SCALE GENOMIC DNA]</scope>
    <source>
        <strain>PCC 7425 / ATCC 29141</strain>
    </source>
</reference>
<evidence type="ECO:0000255" key="1">
    <source>
        <dbReference type="HAMAP-Rule" id="MF_00093"/>
    </source>
</evidence>
<evidence type="ECO:0000256" key="2">
    <source>
        <dbReference type="SAM" id="MobiDB-lite"/>
    </source>
</evidence>
<protein>
    <recommendedName>
        <fullName evidence="1">Peptide chain release factor 1</fullName>
        <shortName evidence="1">RF-1</shortName>
    </recommendedName>
</protein>
<dbReference type="EMBL" id="CP001344">
    <property type="protein sequence ID" value="ACL43389.1"/>
    <property type="molecule type" value="Genomic_DNA"/>
</dbReference>
<dbReference type="SMR" id="B8HXV0"/>
<dbReference type="STRING" id="395961.Cyan7425_1003"/>
<dbReference type="KEGG" id="cyn:Cyan7425_1003"/>
<dbReference type="eggNOG" id="COG0216">
    <property type="taxonomic scope" value="Bacteria"/>
</dbReference>
<dbReference type="HOGENOM" id="CLU_036856_0_1_3"/>
<dbReference type="OrthoDB" id="9806673at2"/>
<dbReference type="GO" id="GO:0005737">
    <property type="term" value="C:cytoplasm"/>
    <property type="evidence" value="ECO:0007669"/>
    <property type="project" value="UniProtKB-SubCell"/>
</dbReference>
<dbReference type="GO" id="GO:0016149">
    <property type="term" value="F:translation release factor activity, codon specific"/>
    <property type="evidence" value="ECO:0007669"/>
    <property type="project" value="UniProtKB-UniRule"/>
</dbReference>
<dbReference type="FunFam" id="3.30.160.20:FF:000004">
    <property type="entry name" value="Peptide chain release factor 1"/>
    <property type="match status" value="1"/>
</dbReference>
<dbReference type="FunFam" id="3.30.70.1660:FF:000002">
    <property type="entry name" value="Peptide chain release factor 1"/>
    <property type="match status" value="1"/>
</dbReference>
<dbReference type="FunFam" id="3.30.70.1660:FF:000014">
    <property type="entry name" value="Peptide chain release factor 1"/>
    <property type="match status" value="1"/>
</dbReference>
<dbReference type="Gene3D" id="3.30.160.20">
    <property type="match status" value="1"/>
</dbReference>
<dbReference type="Gene3D" id="3.30.70.1660">
    <property type="match status" value="2"/>
</dbReference>
<dbReference type="Gene3D" id="6.10.140.1950">
    <property type="match status" value="1"/>
</dbReference>
<dbReference type="HAMAP" id="MF_00093">
    <property type="entry name" value="Rel_fac_1"/>
    <property type="match status" value="1"/>
</dbReference>
<dbReference type="InterPro" id="IPR005139">
    <property type="entry name" value="PCRF"/>
</dbReference>
<dbReference type="InterPro" id="IPR000352">
    <property type="entry name" value="Pep_chain_release_fac_I"/>
</dbReference>
<dbReference type="InterPro" id="IPR045853">
    <property type="entry name" value="Pep_chain_release_fac_I_sf"/>
</dbReference>
<dbReference type="InterPro" id="IPR050057">
    <property type="entry name" value="Prokaryotic/Mito_RF"/>
</dbReference>
<dbReference type="InterPro" id="IPR004373">
    <property type="entry name" value="RF-1"/>
</dbReference>
<dbReference type="NCBIfam" id="TIGR00019">
    <property type="entry name" value="prfA"/>
    <property type="match status" value="1"/>
</dbReference>
<dbReference type="NCBIfam" id="NF001859">
    <property type="entry name" value="PRK00591.1"/>
    <property type="match status" value="1"/>
</dbReference>
<dbReference type="PANTHER" id="PTHR43804">
    <property type="entry name" value="LD18447P"/>
    <property type="match status" value="1"/>
</dbReference>
<dbReference type="PANTHER" id="PTHR43804:SF8">
    <property type="entry name" value="PEPTIDE CHAIN RELEASE FACTOR APG3, CHLOROPLASTIC"/>
    <property type="match status" value="1"/>
</dbReference>
<dbReference type="Pfam" id="PF03462">
    <property type="entry name" value="PCRF"/>
    <property type="match status" value="1"/>
</dbReference>
<dbReference type="Pfam" id="PF00472">
    <property type="entry name" value="RF-1"/>
    <property type="match status" value="1"/>
</dbReference>
<dbReference type="SMART" id="SM00937">
    <property type="entry name" value="PCRF"/>
    <property type="match status" value="1"/>
</dbReference>
<dbReference type="SUPFAM" id="SSF75620">
    <property type="entry name" value="Release factor"/>
    <property type="match status" value="1"/>
</dbReference>
<dbReference type="PROSITE" id="PS00745">
    <property type="entry name" value="RF_PROK_I"/>
    <property type="match status" value="1"/>
</dbReference>
<name>RF1_CYAP4</name>
<accession>B8HXV0</accession>
<keyword id="KW-0963">Cytoplasm</keyword>
<keyword id="KW-0488">Methylation</keyword>
<keyword id="KW-0648">Protein biosynthesis</keyword>
<comment type="function">
    <text evidence="1">Peptide chain release factor 1 directs the termination of translation in response to the peptide chain termination codons UAG and UAA.</text>
</comment>
<comment type="subcellular location">
    <subcellularLocation>
        <location evidence="1">Cytoplasm</location>
    </subcellularLocation>
</comment>
<comment type="PTM">
    <text evidence="1">Methylated by PrmC. Methylation increases the termination efficiency of RF1.</text>
</comment>
<comment type="similarity">
    <text evidence="1">Belongs to the prokaryotic/mitochondrial release factor family.</text>
</comment>
<feature type="chain" id="PRO_1000193484" description="Peptide chain release factor 1">
    <location>
        <begin position="1"/>
        <end position="364"/>
    </location>
</feature>
<feature type="region of interest" description="Disordered" evidence="2">
    <location>
        <begin position="291"/>
        <end position="311"/>
    </location>
</feature>
<feature type="modified residue" description="N5-methylglutamine" evidence="1">
    <location>
        <position position="239"/>
    </location>
</feature>
<gene>
    <name evidence="1" type="primary">prfA</name>
    <name type="ordered locus">Cyan7425_1003</name>
</gene>